<protein>
    <recommendedName>
        <fullName>U7-theraphotoxin-Hhn1a 5</fullName>
        <shortName>U7-TRTX-Hhn1a</shortName>
    </recommendedName>
    <alternativeName>
        <fullName>Hainantoxin-XIII.5</fullName>
        <shortName>HNTX-XIII.5</shortName>
    </alternativeName>
</protein>
<name>H13A5_CYRHA</name>
<evidence type="ECO:0000250" key="1"/>
<evidence type="ECO:0000255" key="2"/>
<evidence type="ECO:0000305" key="3"/>
<feature type="signal peptide" evidence="2">
    <location>
        <begin position="1"/>
        <end position="19"/>
    </location>
</feature>
<feature type="propeptide" id="PRO_0000400687" evidence="1">
    <location>
        <begin position="20"/>
        <end position="50"/>
    </location>
</feature>
<feature type="peptide" id="PRO_0000400688" description="U7-theraphotoxin-Hhn1a 5">
    <location>
        <begin position="51"/>
        <end position="90"/>
    </location>
</feature>
<feature type="disulfide bond" evidence="1">
    <location>
        <begin position="51"/>
        <end position="65"/>
    </location>
</feature>
<feature type="disulfide bond" evidence="1">
    <location>
        <begin position="58"/>
        <end position="70"/>
    </location>
</feature>
<feature type="disulfide bond" evidence="1">
    <location>
        <begin position="64"/>
        <end position="81"/>
    </location>
</feature>
<proteinExistence type="evidence at transcript level"/>
<dbReference type="EMBL" id="GU292990">
    <property type="protein sequence ID" value="ADB56806.1"/>
    <property type="molecule type" value="mRNA"/>
</dbReference>
<dbReference type="SMR" id="D2Y2B3"/>
<dbReference type="ArachnoServer" id="AS001986">
    <property type="toxin name" value="U7-theraphotoxin-Hhn1a"/>
</dbReference>
<dbReference type="GO" id="GO:0005576">
    <property type="term" value="C:extracellular region"/>
    <property type="evidence" value="ECO:0007669"/>
    <property type="project" value="UniProtKB-SubCell"/>
</dbReference>
<dbReference type="GO" id="GO:0008200">
    <property type="term" value="F:ion channel inhibitor activity"/>
    <property type="evidence" value="ECO:0007669"/>
    <property type="project" value="InterPro"/>
</dbReference>
<dbReference type="GO" id="GO:0090729">
    <property type="term" value="F:toxin activity"/>
    <property type="evidence" value="ECO:0007669"/>
    <property type="project" value="UniProtKB-KW"/>
</dbReference>
<dbReference type="InterPro" id="IPR011696">
    <property type="entry name" value="Huwentoxin-1"/>
</dbReference>
<dbReference type="Pfam" id="PF07740">
    <property type="entry name" value="Toxin_12"/>
    <property type="match status" value="1"/>
</dbReference>
<dbReference type="SUPFAM" id="SSF57059">
    <property type="entry name" value="omega toxin-like"/>
    <property type="match status" value="1"/>
</dbReference>
<keyword id="KW-1015">Disulfide bond</keyword>
<keyword id="KW-0872">Ion channel impairing toxin</keyword>
<keyword id="KW-0960">Knottin</keyword>
<keyword id="KW-0964">Secreted</keyword>
<keyword id="KW-0732">Signal</keyword>
<keyword id="KW-0800">Toxin</keyword>
<comment type="function">
    <text evidence="1">Ion channel inhibitor.</text>
</comment>
<comment type="subcellular location">
    <subcellularLocation>
        <location evidence="1">Secreted</location>
    </subcellularLocation>
</comment>
<comment type="tissue specificity">
    <text>Expressed by the venom gland.</text>
</comment>
<comment type="domain">
    <text evidence="1">The presence of a 'disulfide through disulfide knot' structurally defines this protein as a knottin.</text>
</comment>
<comment type="similarity">
    <text evidence="3">Belongs to the neurotoxin 10 (Hwtx-1) family. 13 (Hntx-13) subfamily.</text>
</comment>
<sequence length="90" mass="10581">MKTAIFTVVLALAVFAVLSFGWEANEKALSEESTELIHEKEAASETEARECRYFWGECHDHMPCCDWLVCRYKWPITYNICVWNRTFPEK</sequence>
<organism>
    <name type="scientific">Cyriopagopus hainanus</name>
    <name type="common">Chinese bird spider</name>
    <name type="synonym">Haplopelma hainanum</name>
    <dbReference type="NCBI Taxonomy" id="209901"/>
    <lineage>
        <taxon>Eukaryota</taxon>
        <taxon>Metazoa</taxon>
        <taxon>Ecdysozoa</taxon>
        <taxon>Arthropoda</taxon>
        <taxon>Chelicerata</taxon>
        <taxon>Arachnida</taxon>
        <taxon>Araneae</taxon>
        <taxon>Mygalomorphae</taxon>
        <taxon>Theraphosidae</taxon>
        <taxon>Haplopelma</taxon>
    </lineage>
</organism>
<reference key="1">
    <citation type="journal article" date="2010" name="J. Proteome Res.">
        <title>Molecular diversification of peptide toxins from the tarantula Haplopelma hainanum (Ornithoctonus hainana) venom based on transcriptomic, peptidomic, and genomic analyses.</title>
        <authorList>
            <person name="Tang X."/>
            <person name="Zhang Y."/>
            <person name="Hu W."/>
            <person name="Xu D."/>
            <person name="Tao H."/>
            <person name="Yang X."/>
            <person name="Li Y."/>
            <person name="Jiang L."/>
            <person name="Liang S."/>
        </authorList>
    </citation>
    <scope>NUCLEOTIDE SEQUENCE [LARGE SCALE MRNA]</scope>
    <source>
        <tissue>Venom gland</tissue>
    </source>
</reference>
<accession>D2Y2B3</accession>